<gene>
    <name type="primary">Zcchc9</name>
</gene>
<comment type="function">
    <text evidence="1">May down-regulate transcription mediated by NF-kappa-B and the serum response element.</text>
</comment>
<comment type="subcellular location">
    <subcellularLocation>
        <location evidence="1">Nucleus</location>
        <location evidence="1">Nucleolus</location>
    </subcellularLocation>
    <subcellularLocation>
        <location evidence="1">Nucleus</location>
    </subcellularLocation>
    <text evidence="1">Expressed throughout the nucleus and concentrated mainly in the nucleolus.</text>
</comment>
<comment type="tissue specificity">
    <text evidence="4">Detected in brain cortex and in testis.</text>
</comment>
<comment type="sequence caution" evidence="5">
    <conflict type="erroneous termination">
        <sequence resource="EMBL" id="BC010687"/>
    </conflict>
    <text>Extended C-terminus.</text>
</comment>
<keyword id="KW-0479">Metal-binding</keyword>
<keyword id="KW-0539">Nucleus</keyword>
<keyword id="KW-1185">Reference proteome</keyword>
<keyword id="KW-0677">Repeat</keyword>
<keyword id="KW-0804">Transcription</keyword>
<keyword id="KW-0862">Zinc</keyword>
<keyword id="KW-0863">Zinc-finger</keyword>
<proteinExistence type="evidence at transcript level"/>
<accession>Q8R1J3</accession>
<accession>E9QQ14</accession>
<accession>Q921T6</accession>
<dbReference type="EMBL" id="AC154413">
    <property type="status" value="NOT_ANNOTATED_CDS"/>
    <property type="molecule type" value="Genomic_DNA"/>
</dbReference>
<dbReference type="EMBL" id="BC010687">
    <property type="status" value="NOT_ANNOTATED_CDS"/>
    <property type="molecule type" value="mRNA"/>
</dbReference>
<dbReference type="EMBL" id="BC024496">
    <property type="protein sequence ID" value="AAH24496.1"/>
    <property type="molecule type" value="mRNA"/>
</dbReference>
<dbReference type="CCDS" id="CCDS36742.1"/>
<dbReference type="RefSeq" id="NP_663428.2">
    <property type="nucleotide sequence ID" value="NM_145453.2"/>
</dbReference>
<dbReference type="BioGRID" id="213219">
    <property type="interactions" value="1"/>
</dbReference>
<dbReference type="FunCoup" id="Q8R1J3">
    <property type="interactions" value="2005"/>
</dbReference>
<dbReference type="IntAct" id="Q8R1J3">
    <property type="interactions" value="1"/>
</dbReference>
<dbReference type="STRING" id="10090.ENSMUSP00000022121"/>
<dbReference type="iPTMnet" id="Q8R1J3"/>
<dbReference type="PhosphoSitePlus" id="Q8R1J3"/>
<dbReference type="jPOST" id="Q8R1J3"/>
<dbReference type="PaxDb" id="10090-ENSMUSP00000022121"/>
<dbReference type="ProteomicsDB" id="302118"/>
<dbReference type="Pumba" id="Q8R1J3"/>
<dbReference type="Antibodypedia" id="24688">
    <property type="antibodies" value="37 antibodies from 14 providers"/>
</dbReference>
<dbReference type="DNASU" id="69085"/>
<dbReference type="Ensembl" id="ENSMUST00000022121.13">
    <property type="protein sequence ID" value="ENSMUSP00000022121.7"/>
    <property type="gene ID" value="ENSMUSG00000021621.16"/>
</dbReference>
<dbReference type="GeneID" id="69085"/>
<dbReference type="KEGG" id="mmu:69085"/>
<dbReference type="UCSC" id="uc007rkb.1">
    <property type="organism name" value="mouse"/>
</dbReference>
<dbReference type="AGR" id="MGI:1916335"/>
<dbReference type="CTD" id="84240"/>
<dbReference type="MGI" id="MGI:1916335">
    <property type="gene designation" value="Zcchc9"/>
</dbReference>
<dbReference type="VEuPathDB" id="HostDB:ENSMUSG00000021621"/>
<dbReference type="eggNOG" id="KOG4400">
    <property type="taxonomic scope" value="Eukaryota"/>
</dbReference>
<dbReference type="GeneTree" id="ENSGT00950000183041"/>
<dbReference type="InParanoid" id="Q8R1J3"/>
<dbReference type="OMA" id="RLKRQEM"/>
<dbReference type="OrthoDB" id="3863715at2759"/>
<dbReference type="PhylomeDB" id="Q8R1J3"/>
<dbReference type="TreeFam" id="TF352294"/>
<dbReference type="BioGRID-ORCS" id="69085">
    <property type="hits" value="24 hits in 78 CRISPR screens"/>
</dbReference>
<dbReference type="ChiTaRS" id="Zcchc9">
    <property type="organism name" value="mouse"/>
</dbReference>
<dbReference type="PRO" id="PR:Q8R1J3"/>
<dbReference type="Proteomes" id="UP000000589">
    <property type="component" value="Chromosome 13"/>
</dbReference>
<dbReference type="RNAct" id="Q8R1J3">
    <property type="molecule type" value="protein"/>
</dbReference>
<dbReference type="Bgee" id="ENSMUSG00000021621">
    <property type="expression patterns" value="Expressed in ascending aorta and 249 other cell types or tissues"/>
</dbReference>
<dbReference type="ExpressionAtlas" id="Q8R1J3">
    <property type="expression patterns" value="baseline and differential"/>
</dbReference>
<dbReference type="GO" id="GO:0005730">
    <property type="term" value="C:nucleolus"/>
    <property type="evidence" value="ECO:0007669"/>
    <property type="project" value="UniProtKB-SubCell"/>
</dbReference>
<dbReference type="GO" id="GO:0005654">
    <property type="term" value="C:nucleoplasm"/>
    <property type="evidence" value="ECO:0007669"/>
    <property type="project" value="Ensembl"/>
</dbReference>
<dbReference type="GO" id="GO:0003676">
    <property type="term" value="F:nucleic acid binding"/>
    <property type="evidence" value="ECO:0007669"/>
    <property type="project" value="InterPro"/>
</dbReference>
<dbReference type="GO" id="GO:0008270">
    <property type="term" value="F:zinc ion binding"/>
    <property type="evidence" value="ECO:0007669"/>
    <property type="project" value="UniProtKB-KW"/>
</dbReference>
<dbReference type="FunFam" id="4.10.60.10:FF:000017">
    <property type="entry name" value="zinc finger CCHC domain-containing protein 9"/>
    <property type="match status" value="1"/>
</dbReference>
<dbReference type="FunFam" id="4.10.60.10:FF:000091">
    <property type="entry name" value="Zinc finger CCHC-type-containing 9"/>
    <property type="match status" value="1"/>
</dbReference>
<dbReference type="Gene3D" id="4.10.60.10">
    <property type="entry name" value="Zinc finger, CCHC-type"/>
    <property type="match status" value="2"/>
</dbReference>
<dbReference type="InterPro" id="IPR042246">
    <property type="entry name" value="ZCCHC9"/>
</dbReference>
<dbReference type="InterPro" id="IPR001878">
    <property type="entry name" value="Znf_CCHC"/>
</dbReference>
<dbReference type="InterPro" id="IPR036875">
    <property type="entry name" value="Znf_CCHC_sf"/>
</dbReference>
<dbReference type="PANTHER" id="PTHR46242:SF1">
    <property type="entry name" value="ZINC FINGER CCHC DOMAIN-CONTAINING PROTEIN 9"/>
    <property type="match status" value="1"/>
</dbReference>
<dbReference type="PANTHER" id="PTHR46242">
    <property type="entry name" value="ZINC FINGER CCHC DOMAIN-CONTAINING PROTEIN 9 ZCCHC9"/>
    <property type="match status" value="1"/>
</dbReference>
<dbReference type="Pfam" id="PF00098">
    <property type="entry name" value="zf-CCHC"/>
    <property type="match status" value="2"/>
</dbReference>
<dbReference type="SMART" id="SM00343">
    <property type="entry name" value="ZnF_C2HC"/>
    <property type="match status" value="4"/>
</dbReference>
<dbReference type="SUPFAM" id="SSF57756">
    <property type="entry name" value="Retrovirus zinc finger-like domains"/>
    <property type="match status" value="2"/>
</dbReference>
<dbReference type="PROSITE" id="PS50158">
    <property type="entry name" value="ZF_CCHC"/>
    <property type="match status" value="2"/>
</dbReference>
<feature type="chain" id="PRO_0000150966" description="Zinc finger CCHC domain-containing protein 9">
    <location>
        <begin position="1"/>
        <end position="271"/>
    </location>
</feature>
<feature type="zinc finger region" description="CCHC-type 1" evidence="2">
    <location>
        <begin position="128"/>
        <end position="145"/>
    </location>
</feature>
<feature type="zinc finger region" description="CCHC-type 2" evidence="2">
    <location>
        <begin position="155"/>
        <end position="172"/>
    </location>
</feature>
<feature type="zinc finger region" description="CCHC-type 3" evidence="2">
    <location>
        <begin position="184"/>
        <end position="201"/>
    </location>
</feature>
<feature type="zinc finger region" description="CCHC-type 4" evidence="2">
    <location>
        <begin position="211"/>
        <end position="228"/>
    </location>
</feature>
<feature type="region of interest" description="Disordered" evidence="3">
    <location>
        <begin position="1"/>
        <end position="67"/>
    </location>
</feature>
<feature type="compositionally biased region" description="Polar residues" evidence="3">
    <location>
        <begin position="7"/>
        <end position="20"/>
    </location>
</feature>
<feature type="compositionally biased region" description="Basic and acidic residues" evidence="3">
    <location>
        <begin position="22"/>
        <end position="33"/>
    </location>
</feature>
<feature type="compositionally biased region" description="Polar residues" evidence="3">
    <location>
        <begin position="35"/>
        <end position="46"/>
    </location>
</feature>
<feature type="compositionally biased region" description="Basic residues" evidence="3">
    <location>
        <begin position="56"/>
        <end position="65"/>
    </location>
</feature>
<feature type="sequence conflict" description="In Ref. 2; AAH24496." evidence="5" ref="2">
    <original>F</original>
    <variation>FLY</variation>
    <location>
        <position position="271"/>
    </location>
</feature>
<protein>
    <recommendedName>
        <fullName>Zinc finger CCHC domain-containing protein 9</fullName>
    </recommendedName>
</protein>
<evidence type="ECO:0000250" key="1">
    <source>
        <dbReference type="UniProtKB" id="Q8N567"/>
    </source>
</evidence>
<evidence type="ECO:0000255" key="2">
    <source>
        <dbReference type="PROSITE-ProRule" id="PRU00047"/>
    </source>
</evidence>
<evidence type="ECO:0000256" key="3">
    <source>
        <dbReference type="SAM" id="MobiDB-lite"/>
    </source>
</evidence>
<evidence type="ECO:0000269" key="4">
    <source>
    </source>
</evidence>
<evidence type="ECO:0000305" key="5"/>
<organism>
    <name type="scientific">Mus musculus</name>
    <name type="common">Mouse</name>
    <dbReference type="NCBI Taxonomy" id="10090"/>
    <lineage>
        <taxon>Eukaryota</taxon>
        <taxon>Metazoa</taxon>
        <taxon>Chordata</taxon>
        <taxon>Craniata</taxon>
        <taxon>Vertebrata</taxon>
        <taxon>Euteleostomi</taxon>
        <taxon>Mammalia</taxon>
        <taxon>Eutheria</taxon>
        <taxon>Euarchontoglires</taxon>
        <taxon>Glires</taxon>
        <taxon>Rodentia</taxon>
        <taxon>Myomorpha</taxon>
        <taxon>Muroidea</taxon>
        <taxon>Muridae</taxon>
        <taxon>Murinae</taxon>
        <taxon>Mus</taxon>
        <taxon>Mus</taxon>
    </lineage>
</organism>
<name>ZCHC9_MOUSE</name>
<reference key="1">
    <citation type="journal article" date="2009" name="PLoS Biol.">
        <title>Lineage-specific biology revealed by a finished genome assembly of the mouse.</title>
        <authorList>
            <person name="Church D.M."/>
            <person name="Goodstadt L."/>
            <person name="Hillier L.W."/>
            <person name="Zody M.C."/>
            <person name="Goldstein S."/>
            <person name="She X."/>
            <person name="Bult C.J."/>
            <person name="Agarwala R."/>
            <person name="Cherry J.L."/>
            <person name="DiCuccio M."/>
            <person name="Hlavina W."/>
            <person name="Kapustin Y."/>
            <person name="Meric P."/>
            <person name="Maglott D."/>
            <person name="Birtle Z."/>
            <person name="Marques A.C."/>
            <person name="Graves T."/>
            <person name="Zhou S."/>
            <person name="Teague B."/>
            <person name="Potamousis K."/>
            <person name="Churas C."/>
            <person name="Place M."/>
            <person name="Herschleb J."/>
            <person name="Runnheim R."/>
            <person name="Forrest D."/>
            <person name="Amos-Landgraf J."/>
            <person name="Schwartz D.C."/>
            <person name="Cheng Z."/>
            <person name="Lindblad-Toh K."/>
            <person name="Eichler E.E."/>
            <person name="Ponting C.P."/>
        </authorList>
    </citation>
    <scope>NUCLEOTIDE SEQUENCE [LARGE SCALE GENOMIC DNA]</scope>
    <source>
        <strain>C57BL/6J</strain>
    </source>
</reference>
<reference key="2">
    <citation type="journal article" date="2004" name="Genome Res.">
        <title>The status, quality, and expansion of the NIH full-length cDNA project: the Mammalian Gene Collection (MGC).</title>
        <authorList>
            <consortium name="The MGC Project Team"/>
        </authorList>
    </citation>
    <scope>NUCLEOTIDE SEQUENCE [LARGE SCALE MRNA]</scope>
    <source>
        <tissue>Colon</tissue>
    </source>
</reference>
<reference key="3">
    <citation type="journal article" date="2008" name="J. Genet. Genomics">
        <title>A nuclear localized protein ZCCHC9 is expressed in cerebral cortex and suppresses the MAPK signal pathway.</title>
        <authorList>
            <person name="Zhou A."/>
            <person name="Zhou J."/>
            <person name="Yang L."/>
            <person name="Liu M."/>
            <person name="Li H."/>
            <person name="Xu S."/>
            <person name="Han M."/>
            <person name="Zhang J."/>
        </authorList>
    </citation>
    <scope>TISSUE SPECIFICITY</scope>
</reference>
<sequence length="271" mass="30488">MTRWARVTTSNSKRPLSATSWEDMKKGSVERADQSLPNRKQCQSSRLPLRNDSPQAKRKKNKKKKEYLNEDVNGFMEYLKQNSQVLHNGQLIAADSQEVREEIAVALKKDSRREGRRLKRQAAKKNAMVCFHCRQPGHGIADCPAVLESQDMGTGICYRCGSTEHEMSKCRANVDPALGEFPFAKCFVCGEMGHLSRSCPDNTKGVYADGGSCKLCGSVEHFKKDCRENQNSDRIITVGRWAKGMSADYEDVLDVPKLQKPKTKVPKVVNF</sequence>